<evidence type="ECO:0000255" key="1"/>
<evidence type="ECO:0000255" key="2">
    <source>
        <dbReference type="PROSITE-ProRule" id="PRU00806"/>
    </source>
</evidence>
<evidence type="ECO:0000305" key="3"/>
<dbReference type="EMBL" id="AL080254">
    <property type="protein sequence ID" value="CAB45834.1"/>
    <property type="molecule type" value="Genomic_DNA"/>
</dbReference>
<dbReference type="EMBL" id="AL161553">
    <property type="protein sequence ID" value="CAB79068.1"/>
    <property type="molecule type" value="Genomic_DNA"/>
</dbReference>
<dbReference type="EMBL" id="CP002687">
    <property type="protein sequence ID" value="AEE84353.1"/>
    <property type="molecule type" value="Genomic_DNA"/>
</dbReference>
<dbReference type="PIR" id="T10610">
    <property type="entry name" value="T10610"/>
</dbReference>
<dbReference type="RefSeq" id="NP_193800.1">
    <property type="nucleotide sequence ID" value="NM_118186.2"/>
</dbReference>
<dbReference type="SMR" id="Q9SVH9"/>
<dbReference type="PaxDb" id="3702-AT4G20680.1"/>
<dbReference type="ProteomicsDB" id="224522"/>
<dbReference type="EnsemblPlants" id="AT4G20680.1">
    <property type="protein sequence ID" value="AT4G20680.1"/>
    <property type="gene ID" value="AT4G20680"/>
</dbReference>
<dbReference type="GeneID" id="827815"/>
<dbReference type="Gramene" id="AT4G20680.1">
    <property type="protein sequence ID" value="AT4G20680.1"/>
    <property type="gene ID" value="AT4G20680"/>
</dbReference>
<dbReference type="KEGG" id="ath:AT4G20680"/>
<dbReference type="Araport" id="AT4G20680"/>
<dbReference type="TAIR" id="AT4G20680"/>
<dbReference type="eggNOG" id="ENOG502QPWH">
    <property type="taxonomic scope" value="Eukaryota"/>
</dbReference>
<dbReference type="HOGENOM" id="CLU_000288_35_0_1"/>
<dbReference type="InParanoid" id="Q9SVH9"/>
<dbReference type="OMA" id="EYILNDH"/>
<dbReference type="PhylomeDB" id="Q9SVH9"/>
<dbReference type="PRO" id="PR:Q9SVH9"/>
<dbReference type="Proteomes" id="UP000006548">
    <property type="component" value="Chromosome 4"/>
</dbReference>
<dbReference type="ExpressionAtlas" id="Q9SVH9">
    <property type="expression patterns" value="baseline"/>
</dbReference>
<dbReference type="GO" id="GO:0005576">
    <property type="term" value="C:extracellular region"/>
    <property type="evidence" value="ECO:0007669"/>
    <property type="project" value="UniProtKB-SubCell"/>
</dbReference>
<dbReference type="CDD" id="cd23509">
    <property type="entry name" value="Gnk2-like"/>
    <property type="match status" value="2"/>
</dbReference>
<dbReference type="Gene3D" id="3.30.430.20">
    <property type="entry name" value="Gnk2 domain, C-X8-C-X2-C motif"/>
    <property type="match status" value="2"/>
</dbReference>
<dbReference type="InterPro" id="IPR050581">
    <property type="entry name" value="CRR_secretory_protein"/>
</dbReference>
<dbReference type="InterPro" id="IPR002902">
    <property type="entry name" value="GNK2"/>
</dbReference>
<dbReference type="InterPro" id="IPR038408">
    <property type="entry name" value="GNK2_sf"/>
</dbReference>
<dbReference type="PANTHER" id="PTHR32411:SF54">
    <property type="entry name" value="CYSTEINE-RICH REPEAT SECRETORY PROTEIN 29-RELATED"/>
    <property type="match status" value="1"/>
</dbReference>
<dbReference type="PANTHER" id="PTHR32411">
    <property type="entry name" value="CYSTEINE-RICH REPEAT SECRETORY PROTEIN 38-RELATED"/>
    <property type="match status" value="1"/>
</dbReference>
<dbReference type="Pfam" id="PF01657">
    <property type="entry name" value="Stress-antifung"/>
    <property type="match status" value="2"/>
</dbReference>
<dbReference type="PROSITE" id="PS51473">
    <property type="entry name" value="GNK2"/>
    <property type="match status" value="2"/>
</dbReference>
<accession>Q9SVH9</accession>
<keyword id="KW-1185">Reference proteome</keyword>
<keyword id="KW-0677">Repeat</keyword>
<keyword id="KW-0964">Secreted</keyword>
<keyword id="KW-0732">Signal</keyword>
<gene>
    <name type="primary">CRRSP40</name>
    <name type="ordered locus">At4g20680</name>
    <name type="ORF">F21C20.30</name>
</gene>
<feature type="signal peptide" evidence="1">
    <location>
        <begin position="1"/>
        <end position="32"/>
    </location>
</feature>
<feature type="chain" id="PRO_0000296168" description="Putative cysteine-rich repeat secretory protein 40">
    <location>
        <begin position="33"/>
        <end position="273"/>
    </location>
</feature>
<feature type="domain" description="Gnk2-homologous 1" evidence="2">
    <location>
        <begin position="39"/>
        <end position="141"/>
    </location>
</feature>
<feature type="domain" description="Gnk2-homologous 2" evidence="2">
    <location>
        <begin position="151"/>
        <end position="264"/>
    </location>
</feature>
<organism>
    <name type="scientific">Arabidopsis thaliana</name>
    <name type="common">Mouse-ear cress</name>
    <dbReference type="NCBI Taxonomy" id="3702"/>
    <lineage>
        <taxon>Eukaryota</taxon>
        <taxon>Viridiplantae</taxon>
        <taxon>Streptophyta</taxon>
        <taxon>Embryophyta</taxon>
        <taxon>Tracheophyta</taxon>
        <taxon>Spermatophyta</taxon>
        <taxon>Magnoliopsida</taxon>
        <taxon>eudicotyledons</taxon>
        <taxon>Gunneridae</taxon>
        <taxon>Pentapetalae</taxon>
        <taxon>rosids</taxon>
        <taxon>malvids</taxon>
        <taxon>Brassicales</taxon>
        <taxon>Brassicaceae</taxon>
        <taxon>Camelineae</taxon>
        <taxon>Arabidopsis</taxon>
    </lineage>
</organism>
<proteinExistence type="inferred from homology"/>
<reference key="1">
    <citation type="journal article" date="1999" name="Nature">
        <title>Sequence and analysis of chromosome 4 of the plant Arabidopsis thaliana.</title>
        <authorList>
            <person name="Mayer K.F.X."/>
            <person name="Schueller C."/>
            <person name="Wambutt R."/>
            <person name="Murphy G."/>
            <person name="Volckaert G."/>
            <person name="Pohl T."/>
            <person name="Duesterhoeft A."/>
            <person name="Stiekema W."/>
            <person name="Entian K.-D."/>
            <person name="Terryn N."/>
            <person name="Harris B."/>
            <person name="Ansorge W."/>
            <person name="Brandt P."/>
            <person name="Grivell L.A."/>
            <person name="Rieger M."/>
            <person name="Weichselgartner M."/>
            <person name="de Simone V."/>
            <person name="Obermaier B."/>
            <person name="Mache R."/>
            <person name="Mueller M."/>
            <person name="Kreis M."/>
            <person name="Delseny M."/>
            <person name="Puigdomenech P."/>
            <person name="Watson M."/>
            <person name="Schmidtheini T."/>
            <person name="Reichert B."/>
            <person name="Portetelle D."/>
            <person name="Perez-Alonso M."/>
            <person name="Boutry M."/>
            <person name="Bancroft I."/>
            <person name="Vos P."/>
            <person name="Hoheisel J."/>
            <person name="Zimmermann W."/>
            <person name="Wedler H."/>
            <person name="Ridley P."/>
            <person name="Langham S.-A."/>
            <person name="McCullagh B."/>
            <person name="Bilham L."/>
            <person name="Robben J."/>
            <person name="van der Schueren J."/>
            <person name="Grymonprez B."/>
            <person name="Chuang Y.-J."/>
            <person name="Vandenbussche F."/>
            <person name="Braeken M."/>
            <person name="Weltjens I."/>
            <person name="Voet M."/>
            <person name="Bastiaens I."/>
            <person name="Aert R."/>
            <person name="Defoor E."/>
            <person name="Weitzenegger T."/>
            <person name="Bothe G."/>
            <person name="Ramsperger U."/>
            <person name="Hilbert H."/>
            <person name="Braun M."/>
            <person name="Holzer E."/>
            <person name="Brandt A."/>
            <person name="Peters S."/>
            <person name="van Staveren M."/>
            <person name="Dirkse W."/>
            <person name="Mooijman P."/>
            <person name="Klein Lankhorst R."/>
            <person name="Rose M."/>
            <person name="Hauf J."/>
            <person name="Koetter P."/>
            <person name="Berneiser S."/>
            <person name="Hempel S."/>
            <person name="Feldpausch M."/>
            <person name="Lamberth S."/>
            <person name="Van den Daele H."/>
            <person name="De Keyser A."/>
            <person name="Buysshaert C."/>
            <person name="Gielen J."/>
            <person name="Villarroel R."/>
            <person name="De Clercq R."/>
            <person name="van Montagu M."/>
            <person name="Rogers J."/>
            <person name="Cronin A."/>
            <person name="Quail M.A."/>
            <person name="Bray-Allen S."/>
            <person name="Clark L."/>
            <person name="Doggett J."/>
            <person name="Hall S."/>
            <person name="Kay M."/>
            <person name="Lennard N."/>
            <person name="McLay K."/>
            <person name="Mayes R."/>
            <person name="Pettett A."/>
            <person name="Rajandream M.A."/>
            <person name="Lyne M."/>
            <person name="Benes V."/>
            <person name="Rechmann S."/>
            <person name="Borkova D."/>
            <person name="Bloecker H."/>
            <person name="Scharfe M."/>
            <person name="Grimm M."/>
            <person name="Loehnert T.-H."/>
            <person name="Dose S."/>
            <person name="de Haan M."/>
            <person name="Maarse A.C."/>
            <person name="Schaefer M."/>
            <person name="Mueller-Auer S."/>
            <person name="Gabel C."/>
            <person name="Fuchs M."/>
            <person name="Fartmann B."/>
            <person name="Granderath K."/>
            <person name="Dauner D."/>
            <person name="Herzl A."/>
            <person name="Neumann S."/>
            <person name="Argiriou A."/>
            <person name="Vitale D."/>
            <person name="Liguori R."/>
            <person name="Piravandi E."/>
            <person name="Massenet O."/>
            <person name="Quigley F."/>
            <person name="Clabauld G."/>
            <person name="Muendlein A."/>
            <person name="Felber R."/>
            <person name="Schnabl S."/>
            <person name="Hiller R."/>
            <person name="Schmidt W."/>
            <person name="Lecharny A."/>
            <person name="Aubourg S."/>
            <person name="Chefdor F."/>
            <person name="Cooke R."/>
            <person name="Berger C."/>
            <person name="Monfort A."/>
            <person name="Casacuberta E."/>
            <person name="Gibbons T."/>
            <person name="Weber N."/>
            <person name="Vandenbol M."/>
            <person name="Bargues M."/>
            <person name="Terol J."/>
            <person name="Torres A."/>
            <person name="Perez-Perez A."/>
            <person name="Purnelle B."/>
            <person name="Bent E."/>
            <person name="Johnson S."/>
            <person name="Tacon D."/>
            <person name="Jesse T."/>
            <person name="Heijnen L."/>
            <person name="Schwarz S."/>
            <person name="Scholler P."/>
            <person name="Heber S."/>
            <person name="Francs P."/>
            <person name="Bielke C."/>
            <person name="Frishman D."/>
            <person name="Haase D."/>
            <person name="Lemcke K."/>
            <person name="Mewes H.-W."/>
            <person name="Stocker S."/>
            <person name="Zaccaria P."/>
            <person name="Bevan M."/>
            <person name="Wilson R.K."/>
            <person name="de la Bastide M."/>
            <person name="Habermann K."/>
            <person name="Parnell L."/>
            <person name="Dedhia N."/>
            <person name="Gnoj L."/>
            <person name="Schutz K."/>
            <person name="Huang E."/>
            <person name="Spiegel L."/>
            <person name="Sekhon M."/>
            <person name="Murray J."/>
            <person name="Sheet P."/>
            <person name="Cordes M."/>
            <person name="Abu-Threideh J."/>
            <person name="Stoneking T."/>
            <person name="Kalicki J."/>
            <person name="Graves T."/>
            <person name="Harmon G."/>
            <person name="Edwards J."/>
            <person name="Latreille P."/>
            <person name="Courtney L."/>
            <person name="Cloud J."/>
            <person name="Abbott A."/>
            <person name="Scott K."/>
            <person name="Johnson D."/>
            <person name="Minx P."/>
            <person name="Bentley D."/>
            <person name="Fulton B."/>
            <person name="Miller N."/>
            <person name="Greco T."/>
            <person name="Kemp K."/>
            <person name="Kramer J."/>
            <person name="Fulton L."/>
            <person name="Mardis E."/>
            <person name="Dante M."/>
            <person name="Pepin K."/>
            <person name="Hillier L.W."/>
            <person name="Nelson J."/>
            <person name="Spieth J."/>
            <person name="Ryan E."/>
            <person name="Andrews S."/>
            <person name="Geisel C."/>
            <person name="Layman D."/>
            <person name="Du H."/>
            <person name="Ali J."/>
            <person name="Berghoff A."/>
            <person name="Jones K."/>
            <person name="Drone K."/>
            <person name="Cotton M."/>
            <person name="Joshu C."/>
            <person name="Antonoiu B."/>
            <person name="Zidanic M."/>
            <person name="Strong C."/>
            <person name="Sun H."/>
            <person name="Lamar B."/>
            <person name="Yordan C."/>
            <person name="Ma P."/>
            <person name="Zhong J."/>
            <person name="Preston R."/>
            <person name="Vil D."/>
            <person name="Shekher M."/>
            <person name="Matero A."/>
            <person name="Shah R."/>
            <person name="Swaby I.K."/>
            <person name="O'Shaughnessy A."/>
            <person name="Rodriguez M."/>
            <person name="Hoffman J."/>
            <person name="Till S."/>
            <person name="Granat S."/>
            <person name="Shohdy N."/>
            <person name="Hasegawa A."/>
            <person name="Hameed A."/>
            <person name="Lodhi M."/>
            <person name="Johnson A."/>
            <person name="Chen E."/>
            <person name="Marra M.A."/>
            <person name="Martienssen R."/>
            <person name="McCombie W.R."/>
        </authorList>
    </citation>
    <scope>NUCLEOTIDE SEQUENCE [LARGE SCALE GENOMIC DNA]</scope>
    <source>
        <strain>cv. Columbia</strain>
    </source>
</reference>
<reference key="2">
    <citation type="journal article" date="2017" name="Plant J.">
        <title>Araport11: a complete reannotation of the Arabidopsis thaliana reference genome.</title>
        <authorList>
            <person name="Cheng C.Y."/>
            <person name="Krishnakumar V."/>
            <person name="Chan A.P."/>
            <person name="Thibaud-Nissen F."/>
            <person name="Schobel S."/>
            <person name="Town C.D."/>
        </authorList>
    </citation>
    <scope>GENOME REANNOTATION</scope>
    <source>
        <strain>cv. Columbia</strain>
    </source>
</reference>
<reference key="3">
    <citation type="journal article" date="2001" name="Plant Physiol.">
        <title>A superfamily of proteins with novel cysteine-rich repeats.</title>
        <authorList>
            <person name="Chen Z."/>
        </authorList>
    </citation>
    <scope>GENE FAMILY ORGANIZATION</scope>
    <scope>NOMENCLATURE</scope>
</reference>
<protein>
    <recommendedName>
        <fullName>Putative cysteine-rich repeat secretory protein 40</fullName>
    </recommendedName>
</protein>
<sequence>MYPSCSLLQRLVWFPFLALVATQLLFIRNVSSLNLTNEYLHHKCLVSEGKYKPGSKYEYILNDHIRFLAAGNFRSGSMHMTSGLKPNAVTILYQCRGDSYNSKCRSCYAAGISGLRRRCPRNKGGIIWFDQCFVEITSISVIDFNISKINYENNFPLHNPNRVSGDIKSFNNETMALLKELALKANNKDNMDNGKMALYASGEKRVGTKKVYAMVQCMRDLVKPKMCKECLESIIKEFPECCDGKQGGRILGTSCDFRYELYPFLRTSDSKTV</sequence>
<comment type="subcellular location">
    <subcellularLocation>
        <location evidence="3">Secreted</location>
    </subcellularLocation>
</comment>
<comment type="similarity">
    <text evidence="3">Belongs to the cysteine-rich repeat secretory protein family.</text>
</comment>
<name>CRR40_ARATH</name>